<accession>B5R878</accession>
<evidence type="ECO:0000255" key="1">
    <source>
        <dbReference type="HAMAP-Rule" id="MF_00338"/>
    </source>
</evidence>
<gene>
    <name evidence="1" type="primary">ybjQ</name>
    <name type="ordered locus">SG0873</name>
</gene>
<protein>
    <recommendedName>
        <fullName evidence="1">UPF0145 protein YbjQ</fullName>
    </recommendedName>
</protein>
<comment type="similarity">
    <text evidence="1">Belongs to the UPF0145 family.</text>
</comment>
<proteinExistence type="inferred from homology"/>
<dbReference type="EMBL" id="AM933173">
    <property type="protein sequence ID" value="CAR36766.1"/>
    <property type="molecule type" value="Genomic_DNA"/>
</dbReference>
<dbReference type="RefSeq" id="WP_001160725.1">
    <property type="nucleotide sequence ID" value="NC_011274.1"/>
</dbReference>
<dbReference type="SMR" id="B5R878"/>
<dbReference type="KEGG" id="seg:SG0873"/>
<dbReference type="HOGENOM" id="CLU_117144_3_0_6"/>
<dbReference type="Proteomes" id="UP000008321">
    <property type="component" value="Chromosome"/>
</dbReference>
<dbReference type="Gene3D" id="3.30.110.70">
    <property type="entry name" value="Hypothetical protein apc22750. Chain B"/>
    <property type="match status" value="1"/>
</dbReference>
<dbReference type="HAMAP" id="MF_00338">
    <property type="entry name" value="UPF0145"/>
    <property type="match status" value="1"/>
</dbReference>
<dbReference type="InterPro" id="IPR035439">
    <property type="entry name" value="UPF0145_dom_sf"/>
</dbReference>
<dbReference type="InterPro" id="IPR002765">
    <property type="entry name" value="UPF0145_YbjQ-like"/>
</dbReference>
<dbReference type="NCBIfam" id="NF002776">
    <property type="entry name" value="PRK02877.1"/>
    <property type="match status" value="1"/>
</dbReference>
<dbReference type="PANTHER" id="PTHR34068">
    <property type="entry name" value="UPF0145 PROTEIN YBJQ"/>
    <property type="match status" value="1"/>
</dbReference>
<dbReference type="PANTHER" id="PTHR34068:SF1">
    <property type="entry name" value="UPF0145 PROTEIN YBJQ"/>
    <property type="match status" value="1"/>
</dbReference>
<dbReference type="Pfam" id="PF01906">
    <property type="entry name" value="YbjQ_1"/>
    <property type="match status" value="1"/>
</dbReference>
<dbReference type="SUPFAM" id="SSF117782">
    <property type="entry name" value="YbjQ-like"/>
    <property type="match status" value="1"/>
</dbReference>
<sequence>MQFSTTPTLEGQSIVEYCGVVTGEAILGANIFRDFFAGIRDIVGGRSGAYEKELRKAREIAFQELGEQAKALGADAVVGIDIDYETVGKDGSMLMVSVSGTAVKTRR</sequence>
<organism>
    <name type="scientific">Salmonella gallinarum (strain 287/91 / NCTC 13346)</name>
    <dbReference type="NCBI Taxonomy" id="550538"/>
    <lineage>
        <taxon>Bacteria</taxon>
        <taxon>Pseudomonadati</taxon>
        <taxon>Pseudomonadota</taxon>
        <taxon>Gammaproteobacteria</taxon>
        <taxon>Enterobacterales</taxon>
        <taxon>Enterobacteriaceae</taxon>
        <taxon>Salmonella</taxon>
    </lineage>
</organism>
<feature type="chain" id="PRO_1000120012" description="UPF0145 protein YbjQ">
    <location>
        <begin position="1"/>
        <end position="107"/>
    </location>
</feature>
<reference key="1">
    <citation type="journal article" date="2008" name="Genome Res.">
        <title>Comparative genome analysis of Salmonella enteritidis PT4 and Salmonella gallinarum 287/91 provides insights into evolutionary and host adaptation pathways.</title>
        <authorList>
            <person name="Thomson N.R."/>
            <person name="Clayton D.J."/>
            <person name="Windhorst D."/>
            <person name="Vernikos G."/>
            <person name="Davidson S."/>
            <person name="Churcher C."/>
            <person name="Quail M.A."/>
            <person name="Stevens M."/>
            <person name="Jones M.A."/>
            <person name="Watson M."/>
            <person name="Barron A."/>
            <person name="Layton A."/>
            <person name="Pickard D."/>
            <person name="Kingsley R.A."/>
            <person name="Bignell A."/>
            <person name="Clark L."/>
            <person name="Harris B."/>
            <person name="Ormond D."/>
            <person name="Abdellah Z."/>
            <person name="Brooks K."/>
            <person name="Cherevach I."/>
            <person name="Chillingworth T."/>
            <person name="Woodward J."/>
            <person name="Norberczak H."/>
            <person name="Lord A."/>
            <person name="Arrowsmith C."/>
            <person name="Jagels K."/>
            <person name="Moule S."/>
            <person name="Mungall K."/>
            <person name="Saunders M."/>
            <person name="Whitehead S."/>
            <person name="Chabalgoity J.A."/>
            <person name="Maskell D."/>
            <person name="Humphreys T."/>
            <person name="Roberts M."/>
            <person name="Barrow P.A."/>
            <person name="Dougan G."/>
            <person name="Parkhill J."/>
        </authorList>
    </citation>
    <scope>NUCLEOTIDE SEQUENCE [LARGE SCALE GENOMIC DNA]</scope>
    <source>
        <strain>287/91 / NCTC 13346</strain>
    </source>
</reference>
<name>YBJQ_SALG2</name>